<sequence>MAAKDVVFGDSARSKMVEGVNILANAVKVTLGPKGRNVVLERSFGGPTVTKDGVSVAKEIELKDKLQNMGAQMVKEVASKTSDNAGDGTTTATVLAQSIVREGMKYVASGMNPMDLKRGIDKAVAAAVEELKKISKPCTTNKEIAQVGSISANSDSSIGDRIAEAMDKVGKEGVITVEDGKSLADELDVVEGMQFDRGYLSPYFINNPDKQVAVLDNPFVLLHDKKVSNIRDLLPVLEQVAKAGRPLLIIAEDVEGEALATLVVNNIRGILKTVAVKAPGFGDRRKAMLEDIAILTGGQVVAEETGLTLEKATLAELGQAKRIEVGKENTTIIDGAGEAVNIEARVKQVRAQIEEATSDYDREKLQERVAKLAGGVAVIKVGAATEVEMKEKKARVEDALHATRAAVEEGIVAGGGVALIRARTAIAGLTGANADQNAGIKIVLRAMEEPLRQIVTNGGEEASVVVAAVAAGKGNYGYNAATGEYVDMVEAGVVDPTKVTRTALQNAASVAGLLLTTDAAVAELPKEDAPMPGGMPGGMGGMGMDM</sequence>
<organism>
    <name type="scientific">Burkholderia orbicola (strain AU 1054)</name>
    <dbReference type="NCBI Taxonomy" id="331271"/>
    <lineage>
        <taxon>Bacteria</taxon>
        <taxon>Pseudomonadati</taxon>
        <taxon>Pseudomonadota</taxon>
        <taxon>Betaproteobacteria</taxon>
        <taxon>Burkholderiales</taxon>
        <taxon>Burkholderiaceae</taxon>
        <taxon>Burkholderia</taxon>
        <taxon>Burkholderia cepacia complex</taxon>
        <taxon>Burkholderia orbicola</taxon>
    </lineage>
</organism>
<evidence type="ECO:0000255" key="1">
    <source>
        <dbReference type="HAMAP-Rule" id="MF_00600"/>
    </source>
</evidence>
<evidence type="ECO:0000256" key="2">
    <source>
        <dbReference type="SAM" id="MobiDB-lite"/>
    </source>
</evidence>
<feature type="chain" id="PRO_0000256879" description="Chaperonin GroEL 1">
    <location>
        <begin position="1"/>
        <end position="546"/>
    </location>
</feature>
<feature type="region of interest" description="Disordered" evidence="2">
    <location>
        <begin position="526"/>
        <end position="546"/>
    </location>
</feature>
<feature type="compositionally biased region" description="Gly residues" evidence="2">
    <location>
        <begin position="534"/>
        <end position="546"/>
    </location>
</feature>
<feature type="binding site" evidence="1">
    <location>
        <begin position="30"/>
        <end position="33"/>
    </location>
    <ligand>
        <name>ATP</name>
        <dbReference type="ChEBI" id="CHEBI:30616"/>
    </ligand>
</feature>
<feature type="binding site" evidence="1">
    <location>
        <position position="51"/>
    </location>
    <ligand>
        <name>ATP</name>
        <dbReference type="ChEBI" id="CHEBI:30616"/>
    </ligand>
</feature>
<feature type="binding site" evidence="1">
    <location>
        <begin position="87"/>
        <end position="91"/>
    </location>
    <ligand>
        <name>ATP</name>
        <dbReference type="ChEBI" id="CHEBI:30616"/>
    </ligand>
</feature>
<feature type="binding site" evidence="1">
    <location>
        <position position="415"/>
    </location>
    <ligand>
        <name>ATP</name>
        <dbReference type="ChEBI" id="CHEBI:30616"/>
    </ligand>
</feature>
<feature type="binding site" evidence="1">
    <location>
        <begin position="479"/>
        <end position="481"/>
    </location>
    <ligand>
        <name>ATP</name>
        <dbReference type="ChEBI" id="CHEBI:30616"/>
    </ligand>
</feature>
<feature type="binding site" evidence="1">
    <location>
        <position position="495"/>
    </location>
    <ligand>
        <name>ATP</name>
        <dbReference type="ChEBI" id="CHEBI:30616"/>
    </ligand>
</feature>
<gene>
    <name evidence="1" type="primary">groEL1</name>
    <name evidence="1" type="synonym">groL1</name>
    <name type="ordered locus">Bcen_0378</name>
</gene>
<protein>
    <recommendedName>
        <fullName evidence="1">Chaperonin GroEL 1</fullName>
        <ecNumber evidence="1">5.6.1.7</ecNumber>
    </recommendedName>
    <alternativeName>
        <fullName evidence="1">60 kDa chaperonin 1</fullName>
    </alternativeName>
    <alternativeName>
        <fullName evidence="1">Chaperonin-60 1</fullName>
        <shortName evidence="1">Cpn60 1</shortName>
    </alternativeName>
</protein>
<accession>Q1BYL5</accession>
<keyword id="KW-0067">ATP-binding</keyword>
<keyword id="KW-0143">Chaperone</keyword>
<keyword id="KW-0963">Cytoplasm</keyword>
<keyword id="KW-0413">Isomerase</keyword>
<keyword id="KW-0547">Nucleotide-binding</keyword>
<name>CH601_BURO1</name>
<dbReference type="EC" id="5.6.1.7" evidence="1"/>
<dbReference type="EMBL" id="CP000378">
    <property type="protein sequence ID" value="ABF75290.1"/>
    <property type="molecule type" value="Genomic_DNA"/>
</dbReference>
<dbReference type="SMR" id="Q1BYL5"/>
<dbReference type="HOGENOM" id="CLU_016503_3_0_4"/>
<dbReference type="GO" id="GO:0005737">
    <property type="term" value="C:cytoplasm"/>
    <property type="evidence" value="ECO:0007669"/>
    <property type="project" value="UniProtKB-SubCell"/>
</dbReference>
<dbReference type="GO" id="GO:0005524">
    <property type="term" value="F:ATP binding"/>
    <property type="evidence" value="ECO:0007669"/>
    <property type="project" value="UniProtKB-UniRule"/>
</dbReference>
<dbReference type="GO" id="GO:0140662">
    <property type="term" value="F:ATP-dependent protein folding chaperone"/>
    <property type="evidence" value="ECO:0007669"/>
    <property type="project" value="InterPro"/>
</dbReference>
<dbReference type="GO" id="GO:0016853">
    <property type="term" value="F:isomerase activity"/>
    <property type="evidence" value="ECO:0007669"/>
    <property type="project" value="UniProtKB-KW"/>
</dbReference>
<dbReference type="GO" id="GO:0051082">
    <property type="term" value="F:unfolded protein binding"/>
    <property type="evidence" value="ECO:0007669"/>
    <property type="project" value="UniProtKB-UniRule"/>
</dbReference>
<dbReference type="GO" id="GO:0042026">
    <property type="term" value="P:protein refolding"/>
    <property type="evidence" value="ECO:0007669"/>
    <property type="project" value="UniProtKB-UniRule"/>
</dbReference>
<dbReference type="CDD" id="cd03344">
    <property type="entry name" value="GroEL"/>
    <property type="match status" value="1"/>
</dbReference>
<dbReference type="FunFam" id="1.10.560.10:FF:000001">
    <property type="entry name" value="60 kDa chaperonin"/>
    <property type="match status" value="1"/>
</dbReference>
<dbReference type="FunFam" id="3.50.7.10:FF:000001">
    <property type="entry name" value="60 kDa chaperonin"/>
    <property type="match status" value="1"/>
</dbReference>
<dbReference type="Gene3D" id="3.50.7.10">
    <property type="entry name" value="GroEL"/>
    <property type="match status" value="1"/>
</dbReference>
<dbReference type="Gene3D" id="1.10.560.10">
    <property type="entry name" value="GroEL-like equatorial domain"/>
    <property type="match status" value="1"/>
</dbReference>
<dbReference type="Gene3D" id="3.30.260.10">
    <property type="entry name" value="TCP-1-like chaperonin intermediate domain"/>
    <property type="match status" value="1"/>
</dbReference>
<dbReference type="HAMAP" id="MF_00600">
    <property type="entry name" value="CH60"/>
    <property type="match status" value="1"/>
</dbReference>
<dbReference type="InterPro" id="IPR018370">
    <property type="entry name" value="Chaperonin_Cpn60_CS"/>
</dbReference>
<dbReference type="InterPro" id="IPR001844">
    <property type="entry name" value="Cpn60/GroEL"/>
</dbReference>
<dbReference type="InterPro" id="IPR002423">
    <property type="entry name" value="Cpn60/GroEL/TCP-1"/>
</dbReference>
<dbReference type="InterPro" id="IPR027409">
    <property type="entry name" value="GroEL-like_apical_dom_sf"/>
</dbReference>
<dbReference type="InterPro" id="IPR027413">
    <property type="entry name" value="GROEL-like_equatorial_sf"/>
</dbReference>
<dbReference type="InterPro" id="IPR027410">
    <property type="entry name" value="TCP-1-like_intermed_sf"/>
</dbReference>
<dbReference type="NCBIfam" id="TIGR02348">
    <property type="entry name" value="GroEL"/>
    <property type="match status" value="1"/>
</dbReference>
<dbReference type="NCBIfam" id="NF000592">
    <property type="entry name" value="PRK00013.1"/>
    <property type="match status" value="1"/>
</dbReference>
<dbReference type="NCBIfam" id="NF009487">
    <property type="entry name" value="PRK12849.1"/>
    <property type="match status" value="1"/>
</dbReference>
<dbReference type="NCBIfam" id="NF009488">
    <property type="entry name" value="PRK12850.1"/>
    <property type="match status" value="1"/>
</dbReference>
<dbReference type="NCBIfam" id="NF009489">
    <property type="entry name" value="PRK12851.1"/>
    <property type="match status" value="1"/>
</dbReference>
<dbReference type="PANTHER" id="PTHR45633">
    <property type="entry name" value="60 KDA HEAT SHOCK PROTEIN, MITOCHONDRIAL"/>
    <property type="match status" value="1"/>
</dbReference>
<dbReference type="Pfam" id="PF00118">
    <property type="entry name" value="Cpn60_TCP1"/>
    <property type="match status" value="1"/>
</dbReference>
<dbReference type="PRINTS" id="PR00298">
    <property type="entry name" value="CHAPERONIN60"/>
</dbReference>
<dbReference type="SUPFAM" id="SSF52029">
    <property type="entry name" value="GroEL apical domain-like"/>
    <property type="match status" value="1"/>
</dbReference>
<dbReference type="SUPFAM" id="SSF48592">
    <property type="entry name" value="GroEL equatorial domain-like"/>
    <property type="match status" value="1"/>
</dbReference>
<dbReference type="SUPFAM" id="SSF54849">
    <property type="entry name" value="GroEL-intermediate domain like"/>
    <property type="match status" value="1"/>
</dbReference>
<dbReference type="PROSITE" id="PS00296">
    <property type="entry name" value="CHAPERONINS_CPN60"/>
    <property type="match status" value="1"/>
</dbReference>
<proteinExistence type="inferred from homology"/>
<reference key="1">
    <citation type="submission" date="2006-05" db="EMBL/GenBank/DDBJ databases">
        <title>Complete sequence of chromosome 1 of Burkholderia cenocepacia AU 1054.</title>
        <authorList>
            <consortium name="US DOE Joint Genome Institute"/>
            <person name="Copeland A."/>
            <person name="Lucas S."/>
            <person name="Lapidus A."/>
            <person name="Barry K."/>
            <person name="Detter J.C."/>
            <person name="Glavina del Rio T."/>
            <person name="Hammon N."/>
            <person name="Israni S."/>
            <person name="Dalin E."/>
            <person name="Tice H."/>
            <person name="Pitluck S."/>
            <person name="Chain P."/>
            <person name="Malfatti S."/>
            <person name="Shin M."/>
            <person name="Vergez L."/>
            <person name="Schmutz J."/>
            <person name="Larimer F."/>
            <person name="Land M."/>
            <person name="Hauser L."/>
            <person name="Kyrpides N."/>
            <person name="Lykidis A."/>
            <person name="LiPuma J.J."/>
            <person name="Konstantinidis K."/>
            <person name="Tiedje J.M."/>
            <person name="Richardson P."/>
        </authorList>
    </citation>
    <scope>NUCLEOTIDE SEQUENCE [LARGE SCALE GENOMIC DNA]</scope>
    <source>
        <strain>AU 1054</strain>
    </source>
</reference>
<comment type="function">
    <text evidence="1">Together with its co-chaperonin GroES, plays an essential role in assisting protein folding. The GroEL-GroES system forms a nano-cage that allows encapsulation of the non-native substrate proteins and provides a physical environment optimized to promote and accelerate protein folding.</text>
</comment>
<comment type="catalytic activity">
    <reaction evidence="1">
        <text>ATP + H2O + a folded polypeptide = ADP + phosphate + an unfolded polypeptide.</text>
        <dbReference type="EC" id="5.6.1.7"/>
    </reaction>
</comment>
<comment type="subunit">
    <text evidence="1">Forms a cylinder of 14 subunits composed of two heptameric rings stacked back-to-back. Interacts with the co-chaperonin GroES.</text>
</comment>
<comment type="subcellular location">
    <subcellularLocation>
        <location evidence="1">Cytoplasm</location>
    </subcellularLocation>
</comment>
<comment type="similarity">
    <text evidence="1">Belongs to the chaperonin (HSP60) family.</text>
</comment>